<organism>
    <name type="scientific">Aspergillus niger (strain ATCC MYA-4892 / CBS 513.88 / FGSC A1513)</name>
    <dbReference type="NCBI Taxonomy" id="425011"/>
    <lineage>
        <taxon>Eukaryota</taxon>
        <taxon>Fungi</taxon>
        <taxon>Dikarya</taxon>
        <taxon>Ascomycota</taxon>
        <taxon>Pezizomycotina</taxon>
        <taxon>Eurotiomycetes</taxon>
        <taxon>Eurotiomycetidae</taxon>
        <taxon>Eurotiales</taxon>
        <taxon>Aspergillaceae</taxon>
        <taxon>Aspergillus</taxon>
        <taxon>Aspergillus subgen. Circumdati</taxon>
    </lineage>
</organism>
<feature type="chain" id="PRO_0000418404" description="L-arabinitol 4-dehydrogenase">
    <location>
        <begin position="1"/>
        <end position="386"/>
    </location>
</feature>
<feature type="binding site" evidence="1">
    <location>
        <position position="55"/>
    </location>
    <ligand>
        <name>Zn(2+)</name>
        <dbReference type="ChEBI" id="CHEBI:29105"/>
        <label>1</label>
        <note>catalytic</note>
    </ligand>
</feature>
<feature type="binding site" evidence="1">
    <location>
        <position position="80"/>
    </location>
    <ligand>
        <name>Zn(2+)</name>
        <dbReference type="ChEBI" id="CHEBI:29105"/>
        <label>1</label>
        <note>catalytic</note>
    </ligand>
</feature>
<feature type="binding site" evidence="1">
    <location>
        <position position="81"/>
    </location>
    <ligand>
        <name>Zn(2+)</name>
        <dbReference type="ChEBI" id="CHEBI:29105"/>
        <label>1</label>
        <note>catalytic</note>
    </ligand>
</feature>
<feature type="binding site" evidence="1">
    <location>
        <position position="110"/>
    </location>
    <ligand>
        <name>Zn(2+)</name>
        <dbReference type="ChEBI" id="CHEBI:29105"/>
        <label>2</label>
        <note>structural</note>
    </ligand>
</feature>
<feature type="binding site" evidence="1">
    <location>
        <position position="113"/>
    </location>
    <ligand>
        <name>Zn(2+)</name>
        <dbReference type="ChEBI" id="CHEBI:29105"/>
        <label>2</label>
        <note>structural</note>
    </ligand>
</feature>
<feature type="binding site" evidence="1">
    <location>
        <position position="116"/>
    </location>
    <ligand>
        <name>Zn(2+)</name>
        <dbReference type="ChEBI" id="CHEBI:29105"/>
        <label>2</label>
        <note>structural</note>
    </ligand>
</feature>
<feature type="binding site" evidence="1">
    <location>
        <position position="124"/>
    </location>
    <ligand>
        <name>Zn(2+)</name>
        <dbReference type="ChEBI" id="CHEBI:29105"/>
        <label>2</label>
        <note>structural</note>
    </ligand>
</feature>
<feature type="binding site" evidence="1">
    <location>
        <position position="165"/>
    </location>
    <ligand>
        <name>Zn(2+)</name>
        <dbReference type="ChEBI" id="CHEBI:29105"/>
        <label>1</label>
        <note>catalytic</note>
    </ligand>
</feature>
<feature type="binding site" evidence="1">
    <location>
        <begin position="192"/>
        <end position="193"/>
    </location>
    <ligand>
        <name>NAD(+)</name>
        <dbReference type="ChEBI" id="CHEBI:57540"/>
    </ligand>
</feature>
<feature type="binding site" evidence="1">
    <location>
        <position position="213"/>
    </location>
    <ligand>
        <name>NAD(+)</name>
        <dbReference type="ChEBI" id="CHEBI:57540"/>
    </ligand>
</feature>
<feature type="binding site" evidence="1">
    <location>
        <position position="218"/>
    </location>
    <ligand>
        <name>NAD(+)</name>
        <dbReference type="ChEBI" id="CHEBI:57540"/>
    </ligand>
</feature>
<feature type="binding site" evidence="1">
    <location>
        <position position="293"/>
    </location>
    <ligand>
        <name>NAD(+)</name>
        <dbReference type="ChEBI" id="CHEBI:57540"/>
    </ligand>
</feature>
<feature type="binding site" evidence="1">
    <location>
        <begin position="317"/>
        <end position="319"/>
    </location>
    <ligand>
        <name>NAD(+)</name>
        <dbReference type="ChEBI" id="CHEBI:57540"/>
    </ligand>
</feature>
<feature type="mutagenesis site" description="Abolishes enzyme activity." evidence="3">
    <original>M</original>
    <variation>F</variation>
    <location>
        <position position="70"/>
    </location>
</feature>
<feature type="mutagenesis site" description="Alters cofactor specificity from NAD to NADP; when associated with T-359." evidence="4">
    <original>DI</original>
    <variation>SR</variation>
    <location>
        <begin position="213"/>
        <end position="214"/>
    </location>
</feature>
<feature type="mutagenesis site" description="Increases affinity for D-sorbitol." evidence="3">
    <original>Y</original>
    <variation>F</variation>
    <location>
        <position position="318"/>
    </location>
</feature>
<feature type="mutagenesis site" description="Alters cofactor specificity from NAD to NADP; when associated with 213-SR-214." evidence="4">
    <original>A</original>
    <variation>T</variation>
    <location>
        <position position="359"/>
    </location>
</feature>
<protein>
    <recommendedName>
        <fullName>L-arabinitol 4-dehydrogenase</fullName>
        <shortName>LAD</shortName>
        <ecNumber>1.1.1.12</ecNumber>
    </recommendedName>
</protein>
<evidence type="ECO:0000250" key="1"/>
<evidence type="ECO:0000269" key="2">
    <source>
    </source>
</evidence>
<evidence type="ECO:0000269" key="3">
    <source>
    </source>
</evidence>
<evidence type="ECO:0000269" key="4">
    <source>
    </source>
</evidence>
<evidence type="ECO:0000305" key="5"/>
<accession>A2QAC0</accession>
<accession>Q5GN52</accession>
<dbReference type="EC" id="1.1.1.12"/>
<dbReference type="EMBL" id="AJ854040">
    <property type="protein sequence ID" value="CAH69383.1"/>
    <property type="molecule type" value="Genomic_DNA"/>
</dbReference>
<dbReference type="EMBL" id="AM269980">
    <property type="protein sequence ID" value="CAK37272.1"/>
    <property type="molecule type" value="Genomic_DNA"/>
</dbReference>
<dbReference type="RefSeq" id="XP_001389509.1">
    <property type="nucleotide sequence ID" value="XM_001389472.2"/>
</dbReference>
<dbReference type="SMR" id="A2QAC0"/>
<dbReference type="EnsemblFungi" id="CAK37272">
    <property type="protein sequence ID" value="CAK37272"/>
    <property type="gene ID" value="An01g10920"/>
</dbReference>
<dbReference type="GeneID" id="4977395"/>
<dbReference type="KEGG" id="ang:An01g10920"/>
<dbReference type="VEuPathDB" id="FungiDB:An01g10920"/>
<dbReference type="HOGENOM" id="CLU_026673_11_5_1"/>
<dbReference type="BioCyc" id="MetaCyc:MONOMER-13195"/>
<dbReference type="BRENDA" id="1.1.1.12">
    <property type="organism ID" value="518"/>
</dbReference>
<dbReference type="UniPathway" id="UPA00146">
    <property type="reaction ID" value="UER00575"/>
</dbReference>
<dbReference type="Proteomes" id="UP000006706">
    <property type="component" value="Chromosome 2R"/>
</dbReference>
<dbReference type="GO" id="GO:0050019">
    <property type="term" value="F:L-arabinitol 4-dehydrogenase activity"/>
    <property type="evidence" value="ECO:0000314"/>
    <property type="project" value="UniProtKB"/>
</dbReference>
<dbReference type="GO" id="GO:0003939">
    <property type="term" value="F:L-iditol 2-dehydrogenase (NAD+) activity"/>
    <property type="evidence" value="ECO:0007669"/>
    <property type="project" value="TreeGrafter"/>
</dbReference>
<dbReference type="GO" id="GO:0008270">
    <property type="term" value="F:zinc ion binding"/>
    <property type="evidence" value="ECO:0007669"/>
    <property type="project" value="InterPro"/>
</dbReference>
<dbReference type="GO" id="GO:0019569">
    <property type="term" value="P:L-arabinose catabolic process to xylulose 5-phosphate"/>
    <property type="evidence" value="ECO:0007669"/>
    <property type="project" value="UniProtKB-UniPathway"/>
</dbReference>
<dbReference type="GO" id="GO:0006062">
    <property type="term" value="P:sorbitol catabolic process"/>
    <property type="evidence" value="ECO:0007669"/>
    <property type="project" value="TreeGrafter"/>
</dbReference>
<dbReference type="CDD" id="cd05285">
    <property type="entry name" value="sorbitol_DH"/>
    <property type="match status" value="1"/>
</dbReference>
<dbReference type="FunFam" id="3.40.50.720:FF:000068">
    <property type="entry name" value="Sorbitol dehydrogenase"/>
    <property type="match status" value="1"/>
</dbReference>
<dbReference type="Gene3D" id="3.90.180.10">
    <property type="entry name" value="Medium-chain alcohol dehydrogenases, catalytic domain"/>
    <property type="match status" value="1"/>
</dbReference>
<dbReference type="Gene3D" id="3.40.50.720">
    <property type="entry name" value="NAD(P)-binding Rossmann-like Domain"/>
    <property type="match status" value="1"/>
</dbReference>
<dbReference type="InterPro" id="IPR013149">
    <property type="entry name" value="ADH-like_C"/>
</dbReference>
<dbReference type="InterPro" id="IPR013154">
    <property type="entry name" value="ADH-like_N"/>
</dbReference>
<dbReference type="InterPro" id="IPR002328">
    <property type="entry name" value="ADH_Zn_CS"/>
</dbReference>
<dbReference type="InterPro" id="IPR011032">
    <property type="entry name" value="GroES-like_sf"/>
</dbReference>
<dbReference type="InterPro" id="IPR036291">
    <property type="entry name" value="NAD(P)-bd_dom_sf"/>
</dbReference>
<dbReference type="InterPro" id="IPR045306">
    <property type="entry name" value="SDH-like"/>
</dbReference>
<dbReference type="PANTHER" id="PTHR43161:SF12">
    <property type="entry name" value="L-ARABINITOL 4-DEHYDROGENASE"/>
    <property type="match status" value="1"/>
</dbReference>
<dbReference type="PANTHER" id="PTHR43161">
    <property type="entry name" value="SORBITOL DEHYDROGENASE"/>
    <property type="match status" value="1"/>
</dbReference>
<dbReference type="Pfam" id="PF08240">
    <property type="entry name" value="ADH_N"/>
    <property type="match status" value="1"/>
</dbReference>
<dbReference type="Pfam" id="PF00107">
    <property type="entry name" value="ADH_zinc_N"/>
    <property type="match status" value="1"/>
</dbReference>
<dbReference type="SUPFAM" id="SSF50129">
    <property type="entry name" value="GroES-like"/>
    <property type="match status" value="1"/>
</dbReference>
<dbReference type="SUPFAM" id="SSF51735">
    <property type="entry name" value="NAD(P)-binding Rossmann-fold domains"/>
    <property type="match status" value="1"/>
</dbReference>
<dbReference type="PROSITE" id="PS00059">
    <property type="entry name" value="ADH_ZINC"/>
    <property type="match status" value="1"/>
</dbReference>
<keyword id="KW-0054">Arabinose catabolism</keyword>
<keyword id="KW-0119">Carbohydrate metabolism</keyword>
<keyword id="KW-0479">Metal-binding</keyword>
<keyword id="KW-0520">NAD</keyword>
<keyword id="KW-0560">Oxidoreductase</keyword>
<keyword id="KW-1185">Reference proteome</keyword>
<keyword id="KW-0862">Zinc</keyword>
<gene>
    <name type="primary">ladA</name>
    <name type="ORF">An01g10920</name>
</gene>
<proteinExistence type="evidence at protein level"/>
<sequence>MATATVLEKANIGVFTNTKHDLWVADAKPTLEEVKNGQGLQPGEVTIEVRSTGICGSDVHFWHAGCIGPMIVTGDHILGHESAGQVVAVAPDVTSLKPGDRVAVEPNIICNACEPCLTGRYNGCENVQFLSTPPVDGLLRRYVNHPAIWCHKIGDMSYEDGALLEPLSVSLAGIERSGLRLGDPCLVTGAGPIGLITLLSARAAGASPIVITDIDEGRLEFAKSLVPDVRTYKVQIGLSAEQNAEGIINVFNDGQGSGPGALRPRIAMECTGVESSVASAIWSVKFGGKVFVIGVGKNEMTVPFMRLSTWEIDLQYQYRYCNTWPRAIRLVRNGVIDLKKLVTHRFLLEDAIKAFETAANPKTGAIKVQIMSSEDDVKAASAGQKI</sequence>
<name>LAD_ASPNC</name>
<comment type="function">
    <text evidence="3 4">Catalyzes the NAD-dependent oxidation of L-arabinitol to L-xylulose in the fungal L-arabinose catabolic pathway. L-arabinose catabolism is important for using plant material as a carbon source. Not active with NADP as cosubstrate.</text>
</comment>
<comment type="catalytic activity">
    <reaction evidence="2">
        <text>L-arabinitol + NAD(+) = L-xylulose + NADH + H(+)</text>
        <dbReference type="Rhea" id="RHEA:16381"/>
        <dbReference type="ChEBI" id="CHEBI:15378"/>
        <dbReference type="ChEBI" id="CHEBI:17399"/>
        <dbReference type="ChEBI" id="CHEBI:18403"/>
        <dbReference type="ChEBI" id="CHEBI:57540"/>
        <dbReference type="ChEBI" id="CHEBI:57945"/>
        <dbReference type="EC" id="1.1.1.12"/>
    </reaction>
</comment>
<comment type="cofactor">
    <cofactor evidence="4">
        <name>Zn(2+)</name>
        <dbReference type="ChEBI" id="CHEBI:29105"/>
    </cofactor>
    <text evidence="4">Binds 2 Zn(2+) ions per subunit.</text>
</comment>
<comment type="biophysicochemical properties">
    <kinetics>
        <KM evidence="2 3 4">89 mM for L-arabinitol (at pH 9.6)</KM>
        <KM evidence="2 3 4">5 mM for L-xylulose (at pH 9.6)</KM>
        <KM evidence="2 3 4">50 uM for NAD (at pH 9.6)</KM>
        <KM evidence="2 3 4">8 uM for NADH (at pH 9.6)</KM>
        <Vmax evidence="2 3 4">96.0 umol/min/mg enzyme for the forward reaction</Vmax>
        <Vmax evidence="2 3 4">805.0 umol/min/mg enzyme for the reverse reaction</Vmax>
    </kinetics>
    <phDependence>
        <text evidence="2 3 4">Optimum pH is 9.4. Active from pH 7 to pH 11.</text>
    </phDependence>
    <temperatureDependence>
        <text evidence="2 3 4">Optimum temperature is 40-50 degrees Celsius.</text>
    </temperatureDependence>
</comment>
<comment type="pathway">
    <text evidence="2">Carbohydrate degradation; L-arabinose degradation via L-arabinitol; D-xylulose 5-phosphate from L-arabinose (fungal route): step 2/5.</text>
</comment>
<comment type="subunit">
    <text evidence="4">Homotetramer.</text>
</comment>
<comment type="similarity">
    <text evidence="5">Belongs to the zinc-containing alcohol dehydrogenase family.</text>
</comment>
<reference key="1">
    <citation type="submission" date="2004-11" db="EMBL/GenBank/DDBJ databases">
        <title>Diversity in regulation and substrate specificity of the pentose catabolic pathway genes/enzymes of Aspergillus niger.</title>
        <authorList>
            <person name="de Groot M.J.L."/>
            <person name="Vandeputte-Rutten L."/>
            <person name="van den Dool C."/>
            <person name="Woesten H.A.B."/>
            <person name="Levisson M."/>
            <person name="vanKuyk P.A."/>
            <person name="Ruijter G.J.G."/>
            <person name="de Vries R.P."/>
        </authorList>
    </citation>
    <scope>NUCLEOTIDE SEQUENCE [GENOMIC DNA]</scope>
    <source>
        <strain>ATCC MYA-4892 / CBS 513.88 / FGSC A1513</strain>
    </source>
</reference>
<reference key="2">
    <citation type="journal article" date="2007" name="Nat. Biotechnol.">
        <title>Genome sequencing and analysis of the versatile cell factory Aspergillus niger CBS 513.88.</title>
        <authorList>
            <person name="Pel H.J."/>
            <person name="de Winde J.H."/>
            <person name="Archer D.B."/>
            <person name="Dyer P.S."/>
            <person name="Hofmann G."/>
            <person name="Schaap P.J."/>
            <person name="Turner G."/>
            <person name="de Vries R.P."/>
            <person name="Albang R."/>
            <person name="Albermann K."/>
            <person name="Andersen M.R."/>
            <person name="Bendtsen J.D."/>
            <person name="Benen J.A.E."/>
            <person name="van den Berg M."/>
            <person name="Breestraat S."/>
            <person name="Caddick M.X."/>
            <person name="Contreras R."/>
            <person name="Cornell M."/>
            <person name="Coutinho P.M."/>
            <person name="Danchin E.G.J."/>
            <person name="Debets A.J.M."/>
            <person name="Dekker P."/>
            <person name="van Dijck P.W.M."/>
            <person name="van Dijk A."/>
            <person name="Dijkhuizen L."/>
            <person name="Driessen A.J.M."/>
            <person name="d'Enfert C."/>
            <person name="Geysens S."/>
            <person name="Goosen C."/>
            <person name="Groot G.S.P."/>
            <person name="de Groot P.W.J."/>
            <person name="Guillemette T."/>
            <person name="Henrissat B."/>
            <person name="Herweijer M."/>
            <person name="van den Hombergh J.P.T.W."/>
            <person name="van den Hondel C.A.M.J.J."/>
            <person name="van der Heijden R.T.J.M."/>
            <person name="van der Kaaij R.M."/>
            <person name="Klis F.M."/>
            <person name="Kools H.J."/>
            <person name="Kubicek C.P."/>
            <person name="van Kuyk P.A."/>
            <person name="Lauber J."/>
            <person name="Lu X."/>
            <person name="van der Maarel M.J.E.C."/>
            <person name="Meulenberg R."/>
            <person name="Menke H."/>
            <person name="Mortimer M.A."/>
            <person name="Nielsen J."/>
            <person name="Oliver S.G."/>
            <person name="Olsthoorn M."/>
            <person name="Pal K."/>
            <person name="van Peij N.N.M.E."/>
            <person name="Ram A.F.J."/>
            <person name="Rinas U."/>
            <person name="Roubos J.A."/>
            <person name="Sagt C.M.J."/>
            <person name="Schmoll M."/>
            <person name="Sun J."/>
            <person name="Ussery D."/>
            <person name="Varga J."/>
            <person name="Vervecken W."/>
            <person name="van de Vondervoort P.J.J."/>
            <person name="Wedler H."/>
            <person name="Woesten H.A.B."/>
            <person name="Zeng A.-P."/>
            <person name="van Ooyen A.J.J."/>
            <person name="Visser J."/>
            <person name="Stam H."/>
        </authorList>
    </citation>
    <scope>NUCLEOTIDE SEQUENCE [LARGE SCALE GENOMIC DNA]</scope>
    <source>
        <strain>ATCC MYA-4892 / CBS 513.88 / FGSC A1513</strain>
    </source>
</reference>
<reference key="3">
    <citation type="journal article" date="2005" name="Biotechnol. Prog.">
        <title>Metabolic control analysis of Aspergillus niger L-arabinose catabolism.</title>
        <authorList>
            <person name="de Groot M.J."/>
            <person name="Prathumpai W."/>
            <person name="Visser J."/>
            <person name="Ruijter G.J."/>
        </authorList>
    </citation>
    <scope>CATALYTIC ACTIVITY</scope>
    <scope>BIOPHYSICOCHEMICAL PROPERTIES</scope>
    <scope>PATHWAY</scope>
</reference>
<reference key="4">
    <citation type="journal article" date="2009" name="BMC Microbiol.">
        <title>A single amino acid change (Y318F) in the L-arabitol dehydrogenase (LadA) from Aspergillus niger results in a significant increase in affinity for D-sorbitol.</title>
        <authorList>
            <person name="Rutten L."/>
            <person name="Ribot C."/>
            <person name="Trejo-Aguilar B."/>
            <person name="Wosten H.A."/>
            <person name="de Vries R.P."/>
        </authorList>
    </citation>
    <scope>FUNCTION</scope>
    <scope>MUTAGENESIS OF MET-70 AND TYR-318</scope>
    <scope>BIOPHYSICOCHEMICAL PROPERTIES</scope>
</reference>
<reference key="5">
    <citation type="journal article" date="2010" name="Appl. Microbiol. Biotechnol.">
        <title>Cloning, characterization, and engineering of fungal L-arabinitol dehydrogenases.</title>
        <authorList>
            <person name="Kim B."/>
            <person name="Sullivan R.P."/>
            <person name="Zhao H."/>
        </authorList>
    </citation>
    <scope>FUNCTION</scope>
    <scope>BIOPHYSICOCHEMICAL PROPERTIES</scope>
    <scope>COFACTOR</scope>
    <scope>SUBUNIT</scope>
    <scope>MUTAGENESIS OF 213-ASP-ILE-214 AND ALA-359</scope>
    <scope>ZINC-BINDING</scope>
</reference>